<organism>
    <name type="scientific">Enterobacter sp. (strain 638)</name>
    <dbReference type="NCBI Taxonomy" id="399742"/>
    <lineage>
        <taxon>Bacteria</taxon>
        <taxon>Pseudomonadati</taxon>
        <taxon>Pseudomonadota</taxon>
        <taxon>Gammaproteobacteria</taxon>
        <taxon>Enterobacterales</taxon>
        <taxon>Enterobacteriaceae</taxon>
        <taxon>Enterobacter</taxon>
    </lineage>
</organism>
<gene>
    <name evidence="1" type="primary">ytfE</name>
    <name type="ordered locus">Ent638_0379</name>
</gene>
<feature type="chain" id="PRO_1000069418" description="Iron-sulfur cluster repair protein YtfE">
    <location>
        <begin position="1"/>
        <end position="220"/>
    </location>
</feature>
<reference key="1">
    <citation type="journal article" date="2010" name="PLoS Genet.">
        <title>Genome sequence of the plant growth promoting endophytic bacterium Enterobacter sp. 638.</title>
        <authorList>
            <person name="Taghavi S."/>
            <person name="van der Lelie D."/>
            <person name="Hoffman A."/>
            <person name="Zhang Y.B."/>
            <person name="Walla M.D."/>
            <person name="Vangronsveld J."/>
            <person name="Newman L."/>
            <person name="Monchy S."/>
        </authorList>
    </citation>
    <scope>NUCLEOTIDE SEQUENCE [LARGE SCALE GENOMIC DNA]</scope>
    <source>
        <strain>638</strain>
    </source>
</reference>
<protein>
    <recommendedName>
        <fullName evidence="1">Iron-sulfur cluster repair protein YtfE</fullName>
    </recommendedName>
</protein>
<accession>A4W5T7</accession>
<proteinExistence type="inferred from homology"/>
<name>YTFE_ENT38</name>
<keyword id="KW-0963">Cytoplasm</keyword>
<keyword id="KW-0408">Iron</keyword>
<keyword id="KW-0479">Metal-binding</keyword>
<keyword id="KW-0346">Stress response</keyword>
<evidence type="ECO:0000255" key="1">
    <source>
        <dbReference type="HAMAP-Rule" id="MF_01606"/>
    </source>
</evidence>
<sequence>MAFRDQPLGELVLSIPRASALFRKYDMDYCCGGKQTLERAALRKELDVDAIEAELAQLAEQPIDKDWRTVALGEIIDHIIVRYHDRHREQLPELILQATKVERVHADKASVPRGLAKYLTMLHEELFSHMMKEEQILFPMIKQGMGSQAMGPISVMESEHDDAGELLEVIKHTTDNVTPPADACTTWKAMYNGINELIDDLMEHISLENNVLFPRALAGE</sequence>
<comment type="function">
    <text evidence="1">Di-iron-containing protein involved in the repair of iron-sulfur clusters damaged by oxidative and nitrosative stress conditions.</text>
</comment>
<comment type="subunit">
    <text evidence="1">Homodimer.</text>
</comment>
<comment type="subcellular location">
    <subcellularLocation>
        <location evidence="1">Cytoplasm</location>
    </subcellularLocation>
</comment>
<comment type="similarity">
    <text evidence="1">Belongs to the RIC family. YtfE subfamily.</text>
</comment>
<dbReference type="EMBL" id="CP000653">
    <property type="protein sequence ID" value="ABP59067.1"/>
    <property type="molecule type" value="Genomic_DNA"/>
</dbReference>
<dbReference type="RefSeq" id="WP_012015792.1">
    <property type="nucleotide sequence ID" value="NC_009436.1"/>
</dbReference>
<dbReference type="SMR" id="A4W5T7"/>
<dbReference type="STRING" id="399742.Ent638_0379"/>
<dbReference type="KEGG" id="ent:Ent638_0379"/>
<dbReference type="eggNOG" id="COG2846">
    <property type="taxonomic scope" value="Bacteria"/>
</dbReference>
<dbReference type="HOGENOM" id="CLU_076075_2_0_6"/>
<dbReference type="OrthoDB" id="9797132at2"/>
<dbReference type="Proteomes" id="UP000000230">
    <property type="component" value="Chromosome"/>
</dbReference>
<dbReference type="GO" id="GO:0005737">
    <property type="term" value="C:cytoplasm"/>
    <property type="evidence" value="ECO:0007669"/>
    <property type="project" value="UniProtKB-SubCell"/>
</dbReference>
<dbReference type="GO" id="GO:0046872">
    <property type="term" value="F:metal ion binding"/>
    <property type="evidence" value="ECO:0007669"/>
    <property type="project" value="UniProtKB-KW"/>
</dbReference>
<dbReference type="GO" id="GO:0030091">
    <property type="term" value="P:protein repair"/>
    <property type="evidence" value="ECO:0007669"/>
    <property type="project" value="UniProtKB-UniRule"/>
</dbReference>
<dbReference type="GO" id="GO:0051409">
    <property type="term" value="P:response to nitrosative stress"/>
    <property type="evidence" value="ECO:0007669"/>
    <property type="project" value="UniProtKB-UniRule"/>
</dbReference>
<dbReference type="GO" id="GO:0006979">
    <property type="term" value="P:response to oxidative stress"/>
    <property type="evidence" value="ECO:0007669"/>
    <property type="project" value="UniProtKB-UniRule"/>
</dbReference>
<dbReference type="CDD" id="cd12108">
    <property type="entry name" value="Hr-like"/>
    <property type="match status" value="1"/>
</dbReference>
<dbReference type="FunFam" id="1.20.120.520:FF:000001">
    <property type="entry name" value="Iron-sulfur cluster repair protein YtfE"/>
    <property type="match status" value="1"/>
</dbReference>
<dbReference type="Gene3D" id="1.20.120.520">
    <property type="entry name" value="nmb1532 protein domain like"/>
    <property type="match status" value="1"/>
</dbReference>
<dbReference type="HAMAP" id="MF_01606">
    <property type="entry name" value="RIC_YtfE"/>
    <property type="match status" value="1"/>
</dbReference>
<dbReference type="InterPro" id="IPR023742">
    <property type="entry name" value="FeS-repair_YftE"/>
</dbReference>
<dbReference type="InterPro" id="IPR012312">
    <property type="entry name" value="Hemerythrin-like"/>
</dbReference>
<dbReference type="InterPro" id="IPR019903">
    <property type="entry name" value="RIC_family"/>
</dbReference>
<dbReference type="NCBIfam" id="TIGR03652">
    <property type="entry name" value="FeS_repair_RIC"/>
    <property type="match status" value="1"/>
</dbReference>
<dbReference type="NCBIfam" id="NF008221">
    <property type="entry name" value="PRK10992.1"/>
    <property type="match status" value="1"/>
</dbReference>
<dbReference type="PANTHER" id="PTHR36438">
    <property type="entry name" value="IRON-SULFUR CLUSTER REPAIR PROTEIN YTFE"/>
    <property type="match status" value="1"/>
</dbReference>
<dbReference type="PANTHER" id="PTHR36438:SF1">
    <property type="entry name" value="IRON-SULFUR CLUSTER REPAIR PROTEIN YTFE"/>
    <property type="match status" value="1"/>
</dbReference>
<dbReference type="Pfam" id="PF01814">
    <property type="entry name" value="Hemerythrin"/>
    <property type="match status" value="1"/>
</dbReference>
<dbReference type="Pfam" id="PF04405">
    <property type="entry name" value="ScdA_N"/>
    <property type="match status" value="1"/>
</dbReference>